<name>DNAK_LEGPA</name>
<accession>Q5X3M7</accession>
<feature type="chain" id="PRO_0000225974" description="Chaperone protein DnaK">
    <location>
        <begin position="1"/>
        <end position="644"/>
    </location>
</feature>
<feature type="region of interest" description="Disordered" evidence="2">
    <location>
        <begin position="605"/>
        <end position="644"/>
    </location>
</feature>
<feature type="compositionally biased region" description="Polar residues" evidence="2">
    <location>
        <begin position="609"/>
        <end position="623"/>
    </location>
</feature>
<feature type="compositionally biased region" description="Acidic residues" evidence="2">
    <location>
        <begin position="629"/>
        <end position="644"/>
    </location>
</feature>
<feature type="modified residue" description="Phosphothreonine; by autocatalysis" evidence="1">
    <location>
        <position position="199"/>
    </location>
</feature>
<gene>
    <name evidence="1" type="primary">dnaK</name>
    <name type="ordered locus">lpp2007</name>
</gene>
<proteinExistence type="inferred from homology"/>
<keyword id="KW-0067">ATP-binding</keyword>
<keyword id="KW-0143">Chaperone</keyword>
<keyword id="KW-0547">Nucleotide-binding</keyword>
<keyword id="KW-0597">Phosphoprotein</keyword>
<keyword id="KW-0346">Stress response</keyword>
<evidence type="ECO:0000255" key="1">
    <source>
        <dbReference type="HAMAP-Rule" id="MF_00332"/>
    </source>
</evidence>
<evidence type="ECO:0000256" key="2">
    <source>
        <dbReference type="SAM" id="MobiDB-lite"/>
    </source>
</evidence>
<organism>
    <name type="scientific">Legionella pneumophila (strain Paris)</name>
    <dbReference type="NCBI Taxonomy" id="297246"/>
    <lineage>
        <taxon>Bacteria</taxon>
        <taxon>Pseudomonadati</taxon>
        <taxon>Pseudomonadota</taxon>
        <taxon>Gammaproteobacteria</taxon>
        <taxon>Legionellales</taxon>
        <taxon>Legionellaceae</taxon>
        <taxon>Legionella</taxon>
    </lineage>
</organism>
<sequence>MAKIIGIDLGTTNSCVAVMEGDKPKVIENSEGHRTTPSIVAFTDDNEILVGQSAKRQSVTNPEKTLFAIKRLIGRRFDDPIVQKDIKMVPYKIMKADNGDAWVRVKDQDKAPPQISAEVLRKMKKTAEDYLGEEVKEAVITVPAYFNDSQRQATKDAGRIAGLEVKRIINEPTAAALAYGMDKKRGDSVIAVYDLGGGTFDISIIEIAEVDGEHQFEVLATNGDTFLGGEDFDLALIEYLASEFKKDTGIDLHNDPLALQRLKEAAEKAKIELSSAQQTDVNLPYITADASGPKHLNIKLTRAKLESLVEKLVERTIEPCKTALKDAGLTVSQINEVILVGGQTRMPLVQKTVEEFFGKEPRKDVNPDEAVAVGAAIQAAVLSGEVKDILLLDVTPLSLGIETMGGVMTKLIEKNTTIPTKATQVFSTADDNQTAVTVHVLQGEREQASANKSLGRFDLRDIPPAPRGVPQIEVTFDIDANGILNVSAKDKATGKAQSIVIKASSGLSEEEVAAMVKDAQSHAEEDKKFKEMAELRNQADSLIHSCEKSMKDLADELSEDEKKGIETAISELKEAVQGTDKTRIEDKLKVLTDASAKMAERIYAKKSSEGQAAQGQTQSQESTKPVEEGVVDAEFEEVKEEDKK</sequence>
<protein>
    <recommendedName>
        <fullName evidence="1">Chaperone protein DnaK</fullName>
    </recommendedName>
    <alternativeName>
        <fullName evidence="1">HSP70</fullName>
    </alternativeName>
    <alternativeName>
        <fullName evidence="1">Heat shock 70 kDa protein</fullName>
    </alternativeName>
    <alternativeName>
        <fullName evidence="1">Heat shock protein 70</fullName>
    </alternativeName>
</protein>
<reference key="1">
    <citation type="journal article" date="2004" name="Nat. Genet.">
        <title>Evidence in the Legionella pneumophila genome for exploitation of host cell functions and high genome plasticity.</title>
        <authorList>
            <person name="Cazalet C."/>
            <person name="Rusniok C."/>
            <person name="Brueggemann H."/>
            <person name="Zidane N."/>
            <person name="Magnier A."/>
            <person name="Ma L."/>
            <person name="Tichit M."/>
            <person name="Jarraud S."/>
            <person name="Bouchier C."/>
            <person name="Vandenesch F."/>
            <person name="Kunst F."/>
            <person name="Etienne J."/>
            <person name="Glaser P."/>
            <person name="Buchrieser C."/>
        </authorList>
    </citation>
    <scope>NUCLEOTIDE SEQUENCE [LARGE SCALE GENOMIC DNA]</scope>
    <source>
        <strain>Paris</strain>
    </source>
</reference>
<dbReference type="EMBL" id="CR628336">
    <property type="protein sequence ID" value="CAH13159.1"/>
    <property type="molecule type" value="Genomic_DNA"/>
</dbReference>
<dbReference type="RefSeq" id="WP_011214271.1">
    <property type="nucleotide sequence ID" value="NC_006368.1"/>
</dbReference>
<dbReference type="SMR" id="Q5X3M7"/>
<dbReference type="KEGG" id="lpp:lpp2007"/>
<dbReference type="LegioList" id="lpp2007"/>
<dbReference type="HOGENOM" id="CLU_005965_2_1_6"/>
<dbReference type="GO" id="GO:0005524">
    <property type="term" value="F:ATP binding"/>
    <property type="evidence" value="ECO:0007669"/>
    <property type="project" value="UniProtKB-UniRule"/>
</dbReference>
<dbReference type="GO" id="GO:0140662">
    <property type="term" value="F:ATP-dependent protein folding chaperone"/>
    <property type="evidence" value="ECO:0007669"/>
    <property type="project" value="InterPro"/>
</dbReference>
<dbReference type="GO" id="GO:0051082">
    <property type="term" value="F:unfolded protein binding"/>
    <property type="evidence" value="ECO:0007669"/>
    <property type="project" value="InterPro"/>
</dbReference>
<dbReference type="CDD" id="cd10234">
    <property type="entry name" value="ASKHA_NBD_HSP70_DnaK-like"/>
    <property type="match status" value="1"/>
</dbReference>
<dbReference type="FunFam" id="2.60.34.10:FF:000014">
    <property type="entry name" value="Chaperone protein DnaK HSP70"/>
    <property type="match status" value="1"/>
</dbReference>
<dbReference type="FunFam" id="3.30.30.30:FF:000003">
    <property type="entry name" value="Heat shock protein 9"/>
    <property type="match status" value="1"/>
</dbReference>
<dbReference type="FunFam" id="1.20.1270.10:FF:000001">
    <property type="entry name" value="Molecular chaperone DnaK"/>
    <property type="match status" value="1"/>
</dbReference>
<dbReference type="FunFam" id="3.30.420.40:FF:000004">
    <property type="entry name" value="Molecular chaperone DnaK"/>
    <property type="match status" value="1"/>
</dbReference>
<dbReference type="FunFam" id="3.90.640.10:FF:000003">
    <property type="entry name" value="Molecular chaperone DnaK"/>
    <property type="match status" value="1"/>
</dbReference>
<dbReference type="Gene3D" id="1.20.1270.10">
    <property type="match status" value="1"/>
</dbReference>
<dbReference type="Gene3D" id="3.30.420.40">
    <property type="match status" value="2"/>
</dbReference>
<dbReference type="Gene3D" id="3.90.640.10">
    <property type="entry name" value="Actin, Chain A, domain 4"/>
    <property type="match status" value="1"/>
</dbReference>
<dbReference type="Gene3D" id="2.60.34.10">
    <property type="entry name" value="Substrate Binding Domain Of DNAk, Chain A, domain 1"/>
    <property type="match status" value="1"/>
</dbReference>
<dbReference type="HAMAP" id="MF_00332">
    <property type="entry name" value="DnaK"/>
    <property type="match status" value="1"/>
</dbReference>
<dbReference type="InterPro" id="IPR043129">
    <property type="entry name" value="ATPase_NBD"/>
</dbReference>
<dbReference type="InterPro" id="IPR012725">
    <property type="entry name" value="Chaperone_DnaK"/>
</dbReference>
<dbReference type="InterPro" id="IPR018181">
    <property type="entry name" value="Heat_shock_70_CS"/>
</dbReference>
<dbReference type="InterPro" id="IPR029048">
    <property type="entry name" value="HSP70_C_sf"/>
</dbReference>
<dbReference type="InterPro" id="IPR029047">
    <property type="entry name" value="HSP70_peptide-bd_sf"/>
</dbReference>
<dbReference type="InterPro" id="IPR013126">
    <property type="entry name" value="Hsp_70_fam"/>
</dbReference>
<dbReference type="NCBIfam" id="NF001413">
    <property type="entry name" value="PRK00290.1"/>
    <property type="match status" value="1"/>
</dbReference>
<dbReference type="NCBIfam" id="NF003520">
    <property type="entry name" value="PRK05183.1"/>
    <property type="match status" value="1"/>
</dbReference>
<dbReference type="NCBIfam" id="TIGR02350">
    <property type="entry name" value="prok_dnaK"/>
    <property type="match status" value="1"/>
</dbReference>
<dbReference type="PANTHER" id="PTHR19375">
    <property type="entry name" value="HEAT SHOCK PROTEIN 70KDA"/>
    <property type="match status" value="1"/>
</dbReference>
<dbReference type="Pfam" id="PF00012">
    <property type="entry name" value="HSP70"/>
    <property type="match status" value="1"/>
</dbReference>
<dbReference type="PRINTS" id="PR00301">
    <property type="entry name" value="HEATSHOCK70"/>
</dbReference>
<dbReference type="SUPFAM" id="SSF53067">
    <property type="entry name" value="Actin-like ATPase domain"/>
    <property type="match status" value="2"/>
</dbReference>
<dbReference type="SUPFAM" id="SSF100934">
    <property type="entry name" value="Heat shock protein 70kD (HSP70), C-terminal subdomain"/>
    <property type="match status" value="1"/>
</dbReference>
<dbReference type="SUPFAM" id="SSF100920">
    <property type="entry name" value="Heat shock protein 70kD (HSP70), peptide-binding domain"/>
    <property type="match status" value="1"/>
</dbReference>
<dbReference type="PROSITE" id="PS00297">
    <property type="entry name" value="HSP70_1"/>
    <property type="match status" value="1"/>
</dbReference>
<dbReference type="PROSITE" id="PS00329">
    <property type="entry name" value="HSP70_2"/>
    <property type="match status" value="1"/>
</dbReference>
<dbReference type="PROSITE" id="PS01036">
    <property type="entry name" value="HSP70_3"/>
    <property type="match status" value="1"/>
</dbReference>
<comment type="function">
    <text evidence="1">Acts as a chaperone.</text>
</comment>
<comment type="induction">
    <text evidence="1">By stress conditions e.g. heat shock.</text>
</comment>
<comment type="similarity">
    <text evidence="1">Belongs to the heat shock protein 70 family.</text>
</comment>